<keyword id="KW-0560">Oxidoreductase</keyword>
<proteinExistence type="inferred from homology"/>
<protein>
    <recommendedName>
        <fullName>Phycoerythrobilin:ferredoxin oxidoreductase</fullName>
        <ecNumber>1.3.7.3</ecNumber>
    </recommendedName>
</protein>
<sequence length="257" mass="29289">MTNQRFKSTDPVNIEGWSWQPFLEDAIKRLEGLNVEPYPVPDRFLQREDQTGSKSKSIPVTTATWACKTEKFRQVRAACVSAGSAASVLNFVINPKSTYDLPFFGGDLVTLPAGHLLALDLQPAIKTDEVHTTHVWDRLIPIFERWRDQLPYGGPIPEEAQPFFSPGFLWTRLPLGEEGDELIQSIVRPAFNDYLDLYLELAASAERVTDERSEVLLQGQRKYTDYRAEKDPARGMLTRFHGSEWTEAYIHTVLFDL</sequence>
<comment type="function">
    <text>Catalyzes the two-electron reduction of the C2 and C3(1) diene system of 15,16-dihydrobiliverdin.</text>
</comment>
<comment type="catalytic activity">
    <reaction>
        <text>(3Z)-phycoerythrobilin + oxidized 2[4Fe-4S]-[ferredoxin] = 15,16-dihydrobiliverdin + reduced 2[4Fe-4S]-[ferredoxin] + 2 H(+)</text>
        <dbReference type="Rhea" id="RHEA:22092"/>
        <dbReference type="Rhea" id="RHEA-COMP:10002"/>
        <dbReference type="Rhea" id="RHEA-COMP:10004"/>
        <dbReference type="ChEBI" id="CHEBI:15378"/>
        <dbReference type="ChEBI" id="CHEBI:33722"/>
        <dbReference type="ChEBI" id="CHEBI:33723"/>
        <dbReference type="ChEBI" id="CHEBI:57438"/>
        <dbReference type="ChEBI" id="CHEBI:57899"/>
        <dbReference type="EC" id="1.3.7.3"/>
    </reaction>
</comment>
<comment type="similarity">
    <text evidence="1">Belongs to the HY2 family.</text>
</comment>
<dbReference type="EC" id="1.3.7.3"/>
<dbReference type="EMBL" id="M95288">
    <property type="protein sequence ID" value="AAA27344.1"/>
    <property type="molecule type" value="Genomic_DNA"/>
</dbReference>
<dbReference type="EMBL" id="AF400985">
    <property type="protein sequence ID" value="AAK77916.1"/>
    <property type="molecule type" value="Genomic_DNA"/>
</dbReference>
<dbReference type="PIR" id="B46448">
    <property type="entry name" value="B46448"/>
</dbReference>
<dbReference type="RefSeq" id="WP_048347954.1">
    <property type="nucleotide sequence ID" value="NZ_CP011941.1"/>
</dbReference>
<dbReference type="SMR" id="Q02190"/>
<dbReference type="STRING" id="32052.WB44_13635"/>
<dbReference type="OrthoDB" id="421401at2"/>
<dbReference type="BioCyc" id="MetaCyc:MONOMER-13952"/>
<dbReference type="GO" id="GO:0050897">
    <property type="term" value="F:cobalt ion binding"/>
    <property type="evidence" value="ECO:0007669"/>
    <property type="project" value="InterPro"/>
</dbReference>
<dbReference type="GO" id="GO:0050618">
    <property type="term" value="F:phycoerythrobilin:ferredoxin oxidoreductase activity"/>
    <property type="evidence" value="ECO:0007669"/>
    <property type="project" value="UniProtKB-UniRule"/>
</dbReference>
<dbReference type="GO" id="GO:0010024">
    <property type="term" value="P:phytochromobilin biosynthetic process"/>
    <property type="evidence" value="ECO:0007669"/>
    <property type="project" value="InterPro"/>
</dbReference>
<dbReference type="Gene3D" id="3.40.1500.20">
    <property type="match status" value="1"/>
</dbReference>
<dbReference type="HAMAP" id="MF_00793">
    <property type="entry name" value="PebB"/>
    <property type="match status" value="1"/>
</dbReference>
<dbReference type="InterPro" id="IPR009249">
    <property type="entry name" value="Ferredoxin-dep_bilin_Rdtase"/>
</dbReference>
<dbReference type="InterPro" id="IPR022827">
    <property type="entry name" value="Phycoerythrobilin_Fdx_Rdtase"/>
</dbReference>
<dbReference type="NCBIfam" id="NF009722">
    <property type="entry name" value="PRK13249.1"/>
    <property type="match status" value="1"/>
</dbReference>
<dbReference type="PANTHER" id="PTHR34557">
    <property type="entry name" value="PHYTOCHROMOBILIN:FERREDOXIN OXIDOREDUCTASE, CHLOROPLASTIC"/>
    <property type="match status" value="1"/>
</dbReference>
<dbReference type="PANTHER" id="PTHR34557:SF1">
    <property type="entry name" value="PHYTOCHROMOBILIN:FERREDOXIN OXIDOREDUCTASE, CHLOROPLASTIC"/>
    <property type="match status" value="1"/>
</dbReference>
<dbReference type="Pfam" id="PF05996">
    <property type="entry name" value="Fe_bilin_red"/>
    <property type="match status" value="1"/>
</dbReference>
<evidence type="ECO:0000305" key="1"/>
<gene>
    <name type="primary">pebB</name>
</gene>
<name>PEBB_SYNPY</name>
<reference key="1">
    <citation type="journal article" date="1993" name="Plant Mol. Biol.">
        <title>Genes of the R-phycocyanin II locus of marine Synechococcus spp., and comparison of protein-chromophore interactions in phycocyanins differing in bilin composition.</title>
        <authorList>
            <person name="de Lorimier R."/>
            <person name="Wilbanks S.M."/>
            <person name="Glazer A.N."/>
        </authorList>
    </citation>
    <scope>NUCLEOTIDE SEQUENCE [GENOMIC DNA]</scope>
</reference>
<reference key="2">
    <citation type="journal article" date="1993" name="J. Biol. Chem.">
        <title>Rod structure of a phycoerythrin II-containing phycobilisome. I. Organization and sequence of the gene cluster encoding the major phycobiliprotein rod components in the genome of marine Synechococcus sp. WH8020.</title>
        <authorList>
            <person name="Wilbanks S.M."/>
            <person name="Glazer A.N."/>
        </authorList>
    </citation>
    <scope>NUCLEOTIDE SEQUENCE [GENOMIC DNA]</scope>
</reference>
<reference key="3">
    <citation type="journal article" date="2001" name="Plant Cell">
        <title>Functional genomic analysis of the HY2 family of ferredoxin-dependent bilin reductases from oxygenic photosynthetic organisms.</title>
        <authorList>
            <person name="Frankenberg N."/>
            <person name="Mukougawa K."/>
            <person name="Kohchi T."/>
            <person name="Lagarias J.C."/>
        </authorList>
    </citation>
    <scope>NUCLEOTIDE SEQUENCE [GENOMIC DNA]</scope>
</reference>
<organism>
    <name type="scientific">Synechococcus sp. (strain WH8020)</name>
    <dbReference type="NCBI Taxonomy" id="32052"/>
    <lineage>
        <taxon>Bacteria</taxon>
        <taxon>Bacillati</taxon>
        <taxon>Cyanobacteriota</taxon>
        <taxon>Cyanophyceae</taxon>
        <taxon>Synechococcales</taxon>
        <taxon>Synechococcaceae</taxon>
        <taxon>Synechococcus</taxon>
    </lineage>
</organism>
<feature type="chain" id="PRO_0000216737" description="Phycoerythrobilin:ferredoxin oxidoreductase">
    <location>
        <begin position="1"/>
        <end position="257"/>
    </location>
</feature>
<feature type="sequence conflict" description="In Ref. 1 and 2." evidence="1" ref="1 2">
    <original>D</original>
    <variation>G</variation>
    <location>
        <position position="100"/>
    </location>
</feature>
<feature type="sequence conflict" description="In Ref. 1 and 2." evidence="1" ref="1 2">
    <original>L</original>
    <variation>F</variation>
    <location>
        <position position="111"/>
    </location>
</feature>
<accession>Q02190</accession>
<accession>Q93MM9</accession>